<protein>
    <recommendedName>
        <fullName>Desmoglein-3</fullName>
    </recommendedName>
</protein>
<comment type="function">
    <text evidence="2 3 6">A component of desmosome cell-cell junctions which are required for positive regulation of cellular adhesion (By similarity). Required for adherens and desmosome junction assembly in response to mechanical force in keratinocytes (By similarity). Required for desmosome-mediated cell-cell adhesion of cells surrounding the telogen hair club and the basal layer of the outer root sheath epithelium, consequently is essential for the anchoring of telogen hairs in the hair follicle (By similarity). Required for the maintenance of the epithelial barrier via promoting desmosome-mediated intercellular attachment of suprabasal epithelium to basal cells (By similarity). May play a role in the protein stability of the desmosome plaque components DSP, JUP, PKP1, PKP2 and PKP3 (By similarity). Required for YAP1 localization at the plasma membrane in keratinocytes in response to mechanical strain, via the formation of an interaction complex composed of DSG3, PKP1 and YWHAG (By similarity). May also be involved in the positive regulation of YAP1 target gene transcription and as a result cell proliferation (By similarity). Positively regulates cellular contractility and cell junction formation via organization of cortical F-actin bundles and anchoring of actin to tight junctions, in conjunction with RAC1 (PubMed:22796473). The cytoplasmic pool of DSG3 is required for the localization of CDH1 and CTNNB1 at developing adherens junctions, potentially via modulation of SRC activity (By similarity). Inhibits keratinocyte migration via suppression of p38MAPK signaling, may therefore play a role in moderating wound healing (By similarity).</text>
</comment>
<comment type="subunit">
    <text evidence="2 3">Homodimer (By similarity). Part of a complex that contains DSG3, PKP1, YAP1 and YWHAG; the complex is required for localization of DSG3 and YAP1 to the cell membrane in keratinocytes (By similarity). Interacts with PKP2. Interacts with CTNND1; the interaction facilitates DSG3 localization and retention at cell-cell junctions (By similarity). Interacts with CDH1; the interaction is required for CDH1 localization to developing adherens junctions (By similarity). Interacts with RAC1; the interaction is required for DSG3 translocation to cell-cell junctions, organization of cortical F-actin bundles and actin anchoring at cell-cell junctions (By similarity). Interacts with DSC3; the interaction may limit the interaction of DSC3 with p38MAPK family members and therefore repress p38MAPK signaling activation (By similarity).</text>
</comment>
<comment type="subcellular location">
    <subcellularLocation>
        <location evidence="3">Cell membrane</location>
        <topology evidence="4">Single-pass type I membrane protein</topology>
    </subcellularLocation>
    <subcellularLocation>
        <location evidence="2">Cell junction</location>
        <location evidence="2">Desmosome</location>
    </subcellularLocation>
    <subcellularLocation>
        <location evidence="3">Cytoplasm</location>
    </subcellularLocation>
    <subcellularLocation>
        <location evidence="6">Cell junction</location>
        <location evidence="6">Tight junction</location>
    </subcellularLocation>
    <subcellularLocation>
        <location evidence="3">Cell junction</location>
    </subcellularLocation>
</comment>
<comment type="domain">
    <text evidence="1">Three calcium ions are usually bound at the interface of each cadherin domain and rigidify the connections, imparting a strong curvature to the full-length ectodomain.</text>
</comment>
<evidence type="ECO:0000250" key="1"/>
<evidence type="ECO:0000250" key="2">
    <source>
        <dbReference type="UniProtKB" id="O35902"/>
    </source>
</evidence>
<evidence type="ECO:0000250" key="3">
    <source>
        <dbReference type="UniProtKB" id="P32926"/>
    </source>
</evidence>
<evidence type="ECO:0000255" key="4"/>
<evidence type="ECO:0000255" key="5">
    <source>
        <dbReference type="PROSITE-ProRule" id="PRU00043"/>
    </source>
</evidence>
<evidence type="ECO:0000269" key="6">
    <source>
    </source>
</evidence>
<accession>Q7YRU7</accession>
<reference key="1">
    <citation type="journal article" date="2003" name="J. Dermatol. Sci.">
        <title>Cloning of canine desmoglein 3 and immunoreactivity of serum antibodies in human and canine pemphigus vulgaris with its extracellular domains.</title>
        <authorList>
            <person name="Nishifuji K."/>
            <person name="Amagai M."/>
            <person name="Ota T."/>
            <person name="Nishikawa T."/>
            <person name="Iwasaki T."/>
        </authorList>
    </citation>
    <scope>NUCLEOTIDE SEQUENCE [MRNA]</scope>
    <source>
        <tissue>Oral mucosa</tissue>
    </source>
</reference>
<reference key="2">
    <citation type="journal article" date="2012" name="Exp. Cell Res.">
        <title>Desmoglein 3 acting as an upstream regulator of Rho GTPases, Rac-1/Cdc42 in the regulation of actin organisation and dynamics.</title>
        <authorList>
            <person name="Tsang S.M."/>
            <person name="Brown L."/>
            <person name="Gadmor H."/>
            <person name="Gammon L."/>
            <person name="Fortune F."/>
            <person name="Wheeler A."/>
            <person name="Wan H."/>
        </authorList>
    </citation>
    <scope>FUNCTION</scope>
    <scope>SUBCELLULAR LOCATION</scope>
</reference>
<keyword id="KW-0106">Calcium</keyword>
<keyword id="KW-0130">Cell adhesion</keyword>
<keyword id="KW-0965">Cell junction</keyword>
<keyword id="KW-1003">Cell membrane</keyword>
<keyword id="KW-0165">Cleavage on pair of basic residues</keyword>
<keyword id="KW-0963">Cytoplasm</keyword>
<keyword id="KW-0325">Glycoprotein</keyword>
<keyword id="KW-0472">Membrane</keyword>
<keyword id="KW-0479">Metal-binding</keyword>
<keyword id="KW-1185">Reference proteome</keyword>
<keyword id="KW-0677">Repeat</keyword>
<keyword id="KW-0732">Signal</keyword>
<keyword id="KW-0796">Tight junction</keyword>
<keyword id="KW-0812">Transmembrane</keyword>
<keyword id="KW-1133">Transmembrane helix</keyword>
<name>DSG3_CANLF</name>
<proteinExistence type="evidence at transcript level"/>
<feature type="signal peptide" evidence="4">
    <location>
        <begin position="1"/>
        <end position="23"/>
    </location>
</feature>
<feature type="propeptide" id="PRO_0000003849" evidence="4">
    <location>
        <begin position="24"/>
        <end position="48"/>
    </location>
</feature>
<feature type="chain" id="PRO_0000003850" description="Desmoglein-3">
    <location>
        <begin position="49"/>
        <end position="993"/>
    </location>
</feature>
<feature type="topological domain" description="Extracellular" evidence="4">
    <location>
        <begin position="49"/>
        <end position="617"/>
    </location>
</feature>
<feature type="transmembrane region" description="Helical" evidence="4">
    <location>
        <begin position="618"/>
        <end position="638"/>
    </location>
</feature>
<feature type="topological domain" description="Cytoplasmic" evidence="4">
    <location>
        <begin position="639"/>
        <end position="993"/>
    </location>
</feature>
<feature type="domain" description="Cadherin 1" evidence="5">
    <location>
        <begin position="48"/>
        <end position="156"/>
    </location>
</feature>
<feature type="domain" description="Cadherin 2" evidence="5">
    <location>
        <begin position="157"/>
        <end position="266"/>
    </location>
</feature>
<feature type="domain" description="Cadherin 3" evidence="5">
    <location>
        <begin position="267"/>
        <end position="386"/>
    </location>
</feature>
<feature type="domain" description="Cadherin 4" evidence="5">
    <location>
        <begin position="383"/>
        <end position="494"/>
    </location>
</feature>
<feature type="repeat" description="Desmoglein repeat 1">
    <location>
        <begin position="903"/>
        <end position="929"/>
    </location>
</feature>
<feature type="repeat" description="Desmoglein repeat 2">
    <location>
        <begin position="930"/>
        <end position="960"/>
    </location>
</feature>
<feature type="region of interest" description="Required for interaction with CTNND1 and localization at cell-cell junctions" evidence="2">
    <location>
        <begin position="641"/>
        <end position="713"/>
    </location>
</feature>
<feature type="glycosylation site" description="N-linked (GlcNAc...) asparagine" evidence="4">
    <location>
        <position position="109"/>
    </location>
</feature>
<feature type="glycosylation site" description="N-linked (GlcNAc...) asparagine" evidence="4">
    <location>
        <position position="179"/>
    </location>
</feature>
<feature type="glycosylation site" description="N-linked (GlcNAc...) asparagine" evidence="4">
    <location>
        <position position="458"/>
    </location>
</feature>
<feature type="glycosylation site" description="N-linked (GlcNAc...) asparagine" evidence="4">
    <location>
        <position position="544"/>
    </location>
</feature>
<dbReference type="EMBL" id="AF394784">
    <property type="protein sequence ID" value="AAP80592.1"/>
    <property type="molecule type" value="mRNA"/>
</dbReference>
<dbReference type="RefSeq" id="NP_001002983.1">
    <property type="nucleotide sequence ID" value="NM_001002983.1"/>
</dbReference>
<dbReference type="SMR" id="Q7YRU7"/>
<dbReference type="FunCoup" id="Q7YRU7">
    <property type="interactions" value="9"/>
</dbReference>
<dbReference type="STRING" id="9615.ENSCAFP00000065154"/>
<dbReference type="GlyCosmos" id="Q7YRU7">
    <property type="glycosylation" value="4 sites, No reported glycans"/>
</dbReference>
<dbReference type="PaxDb" id="9612-ENSCAFP00000026686"/>
<dbReference type="Ensembl" id="ENSCAFT00000028690.3">
    <property type="protein sequence ID" value="ENSCAFP00000026686.2"/>
    <property type="gene ID" value="ENSCAFG00000018051.6"/>
</dbReference>
<dbReference type="Ensembl" id="ENSCAFT00030002158.1">
    <property type="protein sequence ID" value="ENSCAFP00030001907.1"/>
    <property type="gene ID" value="ENSCAFG00030001202.1"/>
</dbReference>
<dbReference type="GeneID" id="403470"/>
<dbReference type="KEGG" id="cfa:403470"/>
<dbReference type="CTD" id="1830"/>
<dbReference type="VGNC" id="VGNC:40106">
    <property type="gene designation" value="DSG2"/>
</dbReference>
<dbReference type="eggNOG" id="KOG3594">
    <property type="taxonomic scope" value="Eukaryota"/>
</dbReference>
<dbReference type="HOGENOM" id="CLU_005284_0_0_1"/>
<dbReference type="InParanoid" id="Q7YRU7"/>
<dbReference type="OMA" id="CQCDNRD"/>
<dbReference type="OrthoDB" id="8961010at2759"/>
<dbReference type="TreeFam" id="TF331809"/>
<dbReference type="Reactome" id="R-CFA-351906">
    <property type="pathway name" value="Apoptotic cleavage of cell adhesion proteins"/>
</dbReference>
<dbReference type="Reactome" id="R-CFA-6805567">
    <property type="pathway name" value="Keratinization"/>
</dbReference>
<dbReference type="Reactome" id="R-CFA-6809371">
    <property type="pathway name" value="Formation of the cornified envelope"/>
</dbReference>
<dbReference type="Proteomes" id="UP000002254">
    <property type="component" value="Chromosome 7"/>
</dbReference>
<dbReference type="Proteomes" id="UP000694429">
    <property type="component" value="Chromosome 7"/>
</dbReference>
<dbReference type="Proteomes" id="UP000694542">
    <property type="component" value="Unplaced"/>
</dbReference>
<dbReference type="Proteomes" id="UP000805418">
    <property type="component" value="Unplaced"/>
</dbReference>
<dbReference type="Bgee" id="ENSCAFG00000018051">
    <property type="expression patterns" value="Expressed in keratinocyte and 43 other cell types or tissues"/>
</dbReference>
<dbReference type="GO" id="GO:0005912">
    <property type="term" value="C:adherens junction"/>
    <property type="evidence" value="ECO:0000250"/>
    <property type="project" value="UniProtKB"/>
</dbReference>
<dbReference type="GO" id="GO:0005923">
    <property type="term" value="C:bicellular tight junction"/>
    <property type="evidence" value="ECO:0007669"/>
    <property type="project" value="UniProtKB-SubCell"/>
</dbReference>
<dbReference type="GO" id="GO:0005737">
    <property type="term" value="C:cytoplasm"/>
    <property type="evidence" value="ECO:0000250"/>
    <property type="project" value="UniProtKB"/>
</dbReference>
<dbReference type="GO" id="GO:0030057">
    <property type="term" value="C:desmosome"/>
    <property type="evidence" value="ECO:0000318"/>
    <property type="project" value="GO_Central"/>
</dbReference>
<dbReference type="GO" id="GO:0005886">
    <property type="term" value="C:plasma membrane"/>
    <property type="evidence" value="ECO:0007669"/>
    <property type="project" value="UniProtKB-SubCell"/>
</dbReference>
<dbReference type="GO" id="GO:0070160">
    <property type="term" value="C:tight junction"/>
    <property type="evidence" value="ECO:0000314"/>
    <property type="project" value="UniProtKB"/>
</dbReference>
<dbReference type="GO" id="GO:0005509">
    <property type="term" value="F:calcium ion binding"/>
    <property type="evidence" value="ECO:0000318"/>
    <property type="project" value="GO_Central"/>
</dbReference>
<dbReference type="GO" id="GO:0046983">
    <property type="term" value="F:protein dimerization activity"/>
    <property type="evidence" value="ECO:0000250"/>
    <property type="project" value="UniProtKB"/>
</dbReference>
<dbReference type="GO" id="GO:0007015">
    <property type="term" value="P:actin filament organization"/>
    <property type="evidence" value="ECO:0000315"/>
    <property type="project" value="UniProtKB"/>
</dbReference>
<dbReference type="GO" id="GO:0098609">
    <property type="term" value="P:cell-cell adhesion"/>
    <property type="evidence" value="ECO:0000318"/>
    <property type="project" value="GO_Central"/>
</dbReference>
<dbReference type="GO" id="GO:0007156">
    <property type="term" value="P:homophilic cell adhesion via plasma membrane adhesion molecules"/>
    <property type="evidence" value="ECO:0007669"/>
    <property type="project" value="InterPro"/>
</dbReference>
<dbReference type="GO" id="GO:0030336">
    <property type="term" value="P:negative regulation of cell migration"/>
    <property type="evidence" value="ECO:0000250"/>
    <property type="project" value="UniProtKB"/>
</dbReference>
<dbReference type="GO" id="GO:1903753">
    <property type="term" value="P:negative regulation of p38MAPK cascade"/>
    <property type="evidence" value="ECO:0000250"/>
    <property type="project" value="UniProtKB"/>
</dbReference>
<dbReference type="GO" id="GO:1903348">
    <property type="term" value="P:positive regulation of bicellular tight junction assembly"/>
    <property type="evidence" value="ECO:0000315"/>
    <property type="project" value="UniProtKB"/>
</dbReference>
<dbReference type="GO" id="GO:1904704">
    <property type="term" value="P:positive regulation of protein localization to adherens junction"/>
    <property type="evidence" value="ECO:0000250"/>
    <property type="project" value="UniProtKB"/>
</dbReference>
<dbReference type="GO" id="GO:0031647">
    <property type="term" value="P:regulation of protein stability"/>
    <property type="evidence" value="ECO:0000250"/>
    <property type="project" value="UniProtKB"/>
</dbReference>
<dbReference type="CDD" id="cd11304">
    <property type="entry name" value="Cadherin_repeat"/>
    <property type="match status" value="4"/>
</dbReference>
<dbReference type="FunFam" id="2.60.40.60:FF:000011">
    <property type="entry name" value="Cadherin 1"/>
    <property type="match status" value="1"/>
</dbReference>
<dbReference type="FunFam" id="2.60.40.60:FF:000031">
    <property type="entry name" value="Cadherin 3"/>
    <property type="match status" value="1"/>
</dbReference>
<dbReference type="FunFam" id="2.60.40.60:FF:000068">
    <property type="entry name" value="Desmoglein 1"/>
    <property type="match status" value="1"/>
</dbReference>
<dbReference type="FunFam" id="2.60.40.60:FF:000083">
    <property type="entry name" value="Desmoglein 1"/>
    <property type="match status" value="1"/>
</dbReference>
<dbReference type="FunFam" id="4.10.900.10:FF:000003">
    <property type="entry name" value="Desmoglein 1"/>
    <property type="match status" value="1"/>
</dbReference>
<dbReference type="FunFam" id="2.60.40.60:FF:000074">
    <property type="entry name" value="Desmoglein 4"/>
    <property type="match status" value="1"/>
</dbReference>
<dbReference type="Gene3D" id="2.60.40.60">
    <property type="entry name" value="Cadherins"/>
    <property type="match status" value="5"/>
</dbReference>
<dbReference type="Gene3D" id="4.10.900.10">
    <property type="entry name" value="TCF3-CBD (Catenin binding domain)"/>
    <property type="match status" value="1"/>
</dbReference>
<dbReference type="InterPro" id="IPR050971">
    <property type="entry name" value="Cadherin-domain_protein"/>
</dbReference>
<dbReference type="InterPro" id="IPR002126">
    <property type="entry name" value="Cadherin-like_dom"/>
</dbReference>
<dbReference type="InterPro" id="IPR015919">
    <property type="entry name" value="Cadherin-like_sf"/>
</dbReference>
<dbReference type="InterPro" id="IPR020894">
    <property type="entry name" value="Cadherin_CS"/>
</dbReference>
<dbReference type="InterPro" id="IPR000233">
    <property type="entry name" value="Cadherin_Y-type_LIR"/>
</dbReference>
<dbReference type="InterPro" id="IPR027397">
    <property type="entry name" value="Catenin-bd_sf"/>
</dbReference>
<dbReference type="InterPro" id="IPR009122">
    <property type="entry name" value="Desmosomal_cadherin"/>
</dbReference>
<dbReference type="PANTHER" id="PTHR24025">
    <property type="entry name" value="DESMOGLEIN FAMILY MEMBER"/>
    <property type="match status" value="1"/>
</dbReference>
<dbReference type="PANTHER" id="PTHR24025:SF3">
    <property type="entry name" value="DESMOGLEIN-3"/>
    <property type="match status" value="1"/>
</dbReference>
<dbReference type="Pfam" id="PF01049">
    <property type="entry name" value="CADH_Y-type_LIR"/>
    <property type="match status" value="1"/>
</dbReference>
<dbReference type="Pfam" id="PF00028">
    <property type="entry name" value="Cadherin"/>
    <property type="match status" value="4"/>
</dbReference>
<dbReference type="PRINTS" id="PR00205">
    <property type="entry name" value="CADHERIN"/>
</dbReference>
<dbReference type="PRINTS" id="PR01818">
    <property type="entry name" value="DESMOCADHERN"/>
</dbReference>
<dbReference type="PRINTS" id="PR01819">
    <property type="entry name" value="DESMOGLEIN"/>
</dbReference>
<dbReference type="SMART" id="SM00112">
    <property type="entry name" value="CA"/>
    <property type="match status" value="4"/>
</dbReference>
<dbReference type="SUPFAM" id="SSF49313">
    <property type="entry name" value="Cadherin-like"/>
    <property type="match status" value="4"/>
</dbReference>
<dbReference type="PROSITE" id="PS00232">
    <property type="entry name" value="CADHERIN_1"/>
    <property type="match status" value="2"/>
</dbReference>
<dbReference type="PROSITE" id="PS50268">
    <property type="entry name" value="CADHERIN_2"/>
    <property type="match status" value="4"/>
</dbReference>
<gene>
    <name type="primary">DSG3</name>
</gene>
<organism>
    <name type="scientific">Canis lupus familiaris</name>
    <name type="common">Dog</name>
    <name type="synonym">Canis familiaris</name>
    <dbReference type="NCBI Taxonomy" id="9615"/>
    <lineage>
        <taxon>Eukaryota</taxon>
        <taxon>Metazoa</taxon>
        <taxon>Chordata</taxon>
        <taxon>Craniata</taxon>
        <taxon>Vertebrata</taxon>
        <taxon>Euteleostomi</taxon>
        <taxon>Mammalia</taxon>
        <taxon>Eutheria</taxon>
        <taxon>Laurasiatheria</taxon>
        <taxon>Carnivora</taxon>
        <taxon>Caniformia</taxon>
        <taxon>Canidae</taxon>
        <taxon>Canis</taxon>
    </lineage>
</organism>
<sequence length="993" mass="107551">MTWLLFRTSGALAILMVLILVHGELRIETKGQHGEDETAIQGRRRYKREWVKFAKPCREREDNSRRNPIAKITSDFQATQKITYRISGMGIDQPPFGIFVVDKNTGEINITAIVDREETPSFQITCHALNVLGQDVEKPLILTVKILDVNDNAPVFSQSIFMGEIEENSASNSLVMILNATDADEPNHLNSKIAFKIVSQEPAGTPMFLLSRHTGEVRTLTNSLDREQVSSYRLVVSGADKDGEGLSTQCECSIKVKDVNDNFPMFKESQYSAHIKENTLTSELLRFQVIDWDEEFTDNWLAVYFFTSGNEGNWFEIQTDPRTNEGILKVVKALDYEQLQSVQFSIAVKNKAEFHQSVISQYQVKSTPVTIQVVNVKEGIAFHPASKTFTVRKGISSKKLVNYVLGTYQAIDEDTNKAASYVKYVMGRNDGGLLFIDPKTAQIKFVRNIDRDSTFIVNKTITAEVLAIDENTGKTATGTIYVEVPGFNENCPTVVLEKKAICSSLRSVVVSARVPDNKYTGPYTFSLEEQSLKLPVVWSITTLNATSALLNAQQQLSPGEYTISLTVTDSQDRQCETPESLTLEVCQCDNRDICRSSNGNKDYERLDGKRPSGRLGSAAIGLLLLGLLLLLLAPLLLLTCDYGVGPIGGVTGGFIPVPDGSEGTIHQWGIEGAQPEDKEITNICVPPITTSGADFMENSEVCTNTYAGGTVVEGASGMELTTKLGAATGSGAAAGFGATAGFGAATGLGIGSAGQSGTMRTRHSTGGTNKDYGEGAISMNFLDSYFSQKAFACAEEDDVQEANDCLLIYDNEGMGAPSSPVGSLGCCSFIADELDDSFLDSLGPKFKKLAEISLGIDDEAKQSQPLSKASLSGMESCGYSLEVQQPESVRGQTLLGSQGASALSASSSVLQSATSIPNPVQHGSYMVTETYSASGSLVQPTTTVLEPLLTQNVTVTERVICPISNVSGNLQTPMELRGSRNMICTEDPCSRLI</sequence>